<reference key="1">
    <citation type="journal article" date="2011" name="J. Bacteriol.">
        <title>Comparative genomics of 28 Salmonella enterica isolates: evidence for CRISPR-mediated adaptive sublineage evolution.</title>
        <authorList>
            <person name="Fricke W.F."/>
            <person name="Mammel M.K."/>
            <person name="McDermott P.F."/>
            <person name="Tartera C."/>
            <person name="White D.G."/>
            <person name="Leclerc J.E."/>
            <person name="Ravel J."/>
            <person name="Cebula T.A."/>
        </authorList>
    </citation>
    <scope>NUCLEOTIDE SEQUENCE [LARGE SCALE GENOMIC DNA]</scope>
    <source>
        <strain>CVM19633</strain>
    </source>
</reference>
<feature type="chain" id="PRO_1000129045" description="Peptidase T">
    <location>
        <begin position="1"/>
        <end position="409"/>
    </location>
</feature>
<feature type="active site" evidence="1">
    <location>
        <position position="80"/>
    </location>
</feature>
<feature type="active site" description="Proton acceptor" evidence="1">
    <location>
        <position position="173"/>
    </location>
</feature>
<feature type="binding site" evidence="1">
    <location>
        <position position="78"/>
    </location>
    <ligand>
        <name>Zn(2+)</name>
        <dbReference type="ChEBI" id="CHEBI:29105"/>
        <label>1</label>
    </ligand>
</feature>
<feature type="binding site" evidence="1">
    <location>
        <position position="140"/>
    </location>
    <ligand>
        <name>Zn(2+)</name>
        <dbReference type="ChEBI" id="CHEBI:29105"/>
        <label>1</label>
    </ligand>
</feature>
<feature type="binding site" evidence="1">
    <location>
        <position position="140"/>
    </location>
    <ligand>
        <name>Zn(2+)</name>
        <dbReference type="ChEBI" id="CHEBI:29105"/>
        <label>2</label>
    </ligand>
</feature>
<feature type="binding site" evidence="1">
    <location>
        <position position="174"/>
    </location>
    <ligand>
        <name>Zn(2+)</name>
        <dbReference type="ChEBI" id="CHEBI:29105"/>
        <label>2</label>
    </ligand>
</feature>
<feature type="binding site" evidence="1">
    <location>
        <position position="196"/>
    </location>
    <ligand>
        <name>Zn(2+)</name>
        <dbReference type="ChEBI" id="CHEBI:29105"/>
        <label>1</label>
    </ligand>
</feature>
<feature type="binding site" evidence="1">
    <location>
        <position position="379"/>
    </location>
    <ligand>
        <name>Zn(2+)</name>
        <dbReference type="ChEBI" id="CHEBI:29105"/>
        <label>2</label>
    </ligand>
</feature>
<evidence type="ECO:0000255" key="1">
    <source>
        <dbReference type="HAMAP-Rule" id="MF_00550"/>
    </source>
</evidence>
<sequence length="409" mass="44907">MDKLLERFLHYVSLDTQSKSGVRQVPSTEGQWKLLRLLKQQLEEMGLVNITLSEKGTLMATLPANVEGDIPAIGFISHVDTSPDFSGKNVNPQIVENYRGGDIALGIGDEVLSPVMFPVLHQLLGQTLITTDGKTLLGADDKAGVAEIMTALAVLKGNPIPHGDIKVAFTPDEEVGKGAKHFDVEEFGAQWAYTVDGGGVGELEFENFNAASVNIKIVGNNVHPGTAKGVMVNALSLAARIHAEVPADEAPETTEGYEGFYHLASMKGTVDRAEMHYIIRDFDRKQFEARKRKMMEIAKKVGKGLHPDCYIELVIEDSYYNMREKVVEHPHILDIAQQAMRDCHITPEMKPIRGGTDGAQLSFMGLPCPNLFTGGYNYHGKHEFVTLEGMEKAVQVIVRIAELTAKRGQ</sequence>
<organism>
    <name type="scientific">Salmonella schwarzengrund (strain CVM19633)</name>
    <dbReference type="NCBI Taxonomy" id="439843"/>
    <lineage>
        <taxon>Bacteria</taxon>
        <taxon>Pseudomonadati</taxon>
        <taxon>Pseudomonadota</taxon>
        <taxon>Gammaproteobacteria</taxon>
        <taxon>Enterobacterales</taxon>
        <taxon>Enterobacteriaceae</taxon>
        <taxon>Salmonella</taxon>
    </lineage>
</organism>
<dbReference type="EC" id="3.4.11.4" evidence="1"/>
<dbReference type="EMBL" id="CP001127">
    <property type="protein sequence ID" value="ACF91094.1"/>
    <property type="molecule type" value="Genomic_DNA"/>
</dbReference>
<dbReference type="RefSeq" id="WP_000359412.1">
    <property type="nucleotide sequence ID" value="NC_011094.1"/>
</dbReference>
<dbReference type="SMR" id="B4TTK0"/>
<dbReference type="MEROPS" id="M20.003"/>
<dbReference type="KEGG" id="sew:SeSA_A1306"/>
<dbReference type="HOGENOM" id="CLU_053676_0_0_6"/>
<dbReference type="Proteomes" id="UP000001865">
    <property type="component" value="Chromosome"/>
</dbReference>
<dbReference type="GO" id="GO:0005829">
    <property type="term" value="C:cytosol"/>
    <property type="evidence" value="ECO:0007669"/>
    <property type="project" value="TreeGrafter"/>
</dbReference>
<dbReference type="GO" id="GO:0008237">
    <property type="term" value="F:metallopeptidase activity"/>
    <property type="evidence" value="ECO:0007669"/>
    <property type="project" value="UniProtKB-KW"/>
</dbReference>
<dbReference type="GO" id="GO:0045148">
    <property type="term" value="F:tripeptide aminopeptidase activity"/>
    <property type="evidence" value="ECO:0007669"/>
    <property type="project" value="UniProtKB-UniRule"/>
</dbReference>
<dbReference type="GO" id="GO:0008270">
    <property type="term" value="F:zinc ion binding"/>
    <property type="evidence" value="ECO:0007669"/>
    <property type="project" value="UniProtKB-UniRule"/>
</dbReference>
<dbReference type="GO" id="GO:0043171">
    <property type="term" value="P:peptide catabolic process"/>
    <property type="evidence" value="ECO:0007669"/>
    <property type="project" value="UniProtKB-UniRule"/>
</dbReference>
<dbReference type="GO" id="GO:0006508">
    <property type="term" value="P:proteolysis"/>
    <property type="evidence" value="ECO:0007669"/>
    <property type="project" value="UniProtKB-UniRule"/>
</dbReference>
<dbReference type="CDD" id="cd03892">
    <property type="entry name" value="M20_peptT"/>
    <property type="match status" value="1"/>
</dbReference>
<dbReference type="FunFam" id="3.30.70.360:FF:000002">
    <property type="entry name" value="Peptidase T"/>
    <property type="match status" value="1"/>
</dbReference>
<dbReference type="Gene3D" id="3.30.70.360">
    <property type="match status" value="1"/>
</dbReference>
<dbReference type="Gene3D" id="3.40.630.10">
    <property type="entry name" value="Zn peptidases"/>
    <property type="match status" value="1"/>
</dbReference>
<dbReference type="HAMAP" id="MF_00550">
    <property type="entry name" value="Aminopeptidase_M20"/>
    <property type="match status" value="1"/>
</dbReference>
<dbReference type="InterPro" id="IPR001261">
    <property type="entry name" value="ArgE/DapE_CS"/>
</dbReference>
<dbReference type="InterPro" id="IPR036264">
    <property type="entry name" value="Bact_exopeptidase_dim_dom"/>
</dbReference>
<dbReference type="InterPro" id="IPR002933">
    <property type="entry name" value="Peptidase_M20"/>
</dbReference>
<dbReference type="InterPro" id="IPR011650">
    <property type="entry name" value="Peptidase_M20_dimer"/>
</dbReference>
<dbReference type="InterPro" id="IPR010161">
    <property type="entry name" value="Peptidase_M20B"/>
</dbReference>
<dbReference type="NCBIfam" id="TIGR01882">
    <property type="entry name" value="peptidase-T"/>
    <property type="match status" value="1"/>
</dbReference>
<dbReference type="NCBIfam" id="NF003976">
    <property type="entry name" value="PRK05469.1"/>
    <property type="match status" value="1"/>
</dbReference>
<dbReference type="NCBIfam" id="NF009920">
    <property type="entry name" value="PRK13381.1"/>
    <property type="match status" value="1"/>
</dbReference>
<dbReference type="PANTHER" id="PTHR42994">
    <property type="entry name" value="PEPTIDASE T"/>
    <property type="match status" value="1"/>
</dbReference>
<dbReference type="PANTHER" id="PTHR42994:SF1">
    <property type="entry name" value="PEPTIDASE T"/>
    <property type="match status" value="1"/>
</dbReference>
<dbReference type="Pfam" id="PF07687">
    <property type="entry name" value="M20_dimer"/>
    <property type="match status" value="1"/>
</dbReference>
<dbReference type="Pfam" id="PF01546">
    <property type="entry name" value="Peptidase_M20"/>
    <property type="match status" value="1"/>
</dbReference>
<dbReference type="PIRSF" id="PIRSF037215">
    <property type="entry name" value="Peptidase_M20B"/>
    <property type="match status" value="1"/>
</dbReference>
<dbReference type="SUPFAM" id="SSF55031">
    <property type="entry name" value="Bacterial exopeptidase dimerisation domain"/>
    <property type="match status" value="1"/>
</dbReference>
<dbReference type="SUPFAM" id="SSF53187">
    <property type="entry name" value="Zn-dependent exopeptidases"/>
    <property type="match status" value="1"/>
</dbReference>
<dbReference type="PROSITE" id="PS00758">
    <property type="entry name" value="ARGE_DAPE_CPG2_1"/>
    <property type="match status" value="1"/>
</dbReference>
<dbReference type="PROSITE" id="PS00759">
    <property type="entry name" value="ARGE_DAPE_CPG2_2"/>
    <property type="match status" value="1"/>
</dbReference>
<gene>
    <name evidence="1" type="primary">pepT</name>
    <name type="ordered locus">SeSA_A1306</name>
</gene>
<protein>
    <recommendedName>
        <fullName evidence="1">Peptidase T</fullName>
        <ecNumber evidence="1">3.4.11.4</ecNumber>
    </recommendedName>
    <alternativeName>
        <fullName evidence="1">Aminotripeptidase</fullName>
        <shortName evidence="1">Tripeptidase</shortName>
    </alternativeName>
    <alternativeName>
        <fullName evidence="1">Tripeptide aminopeptidase</fullName>
    </alternativeName>
</protein>
<proteinExistence type="inferred from homology"/>
<comment type="function">
    <text evidence="1">Cleaves the N-terminal amino acid of tripeptides.</text>
</comment>
<comment type="catalytic activity">
    <reaction evidence="1">
        <text>Release of the N-terminal residue from a tripeptide.</text>
        <dbReference type="EC" id="3.4.11.4"/>
    </reaction>
</comment>
<comment type="cofactor">
    <cofactor evidence="1">
        <name>Zn(2+)</name>
        <dbReference type="ChEBI" id="CHEBI:29105"/>
    </cofactor>
    <text evidence="1">Binds 2 Zn(2+) ions per subunit.</text>
</comment>
<comment type="subcellular location">
    <subcellularLocation>
        <location evidence="1">Cytoplasm</location>
    </subcellularLocation>
</comment>
<comment type="similarity">
    <text evidence="1">Belongs to the peptidase M20B family.</text>
</comment>
<accession>B4TTK0</accession>
<name>PEPT_SALSV</name>
<keyword id="KW-0031">Aminopeptidase</keyword>
<keyword id="KW-0963">Cytoplasm</keyword>
<keyword id="KW-0378">Hydrolase</keyword>
<keyword id="KW-0479">Metal-binding</keyword>
<keyword id="KW-0482">Metalloprotease</keyword>
<keyword id="KW-0645">Protease</keyword>
<keyword id="KW-0862">Zinc</keyword>